<name>PHYIP_PONAB</name>
<reference key="1">
    <citation type="submission" date="2004-11" db="EMBL/GenBank/DDBJ databases">
        <authorList>
            <consortium name="The German cDNA consortium"/>
        </authorList>
    </citation>
    <scope>NUCLEOTIDE SEQUENCE [LARGE SCALE MRNA]</scope>
    <source>
        <tissue>Brain cortex</tissue>
    </source>
</reference>
<accession>Q5R4I8</accession>
<accession>Q5R720</accession>
<comment type="function">
    <text evidence="1">Its interaction with PHYH suggests a role in the development of the central system.</text>
</comment>
<comment type="subunit">
    <text evidence="1">Interacts with PHYH and ADGRB1.</text>
</comment>
<comment type="similarity">
    <text evidence="4">Belongs to the PHYHIP family.</text>
</comment>
<protein>
    <recommendedName>
        <fullName>Phytanoyl-CoA hydroxylase-interacting protein</fullName>
    </recommendedName>
    <alternativeName>
        <fullName>Phytanoyl-CoA hydroxylase-associated protein 1</fullName>
        <shortName>PAHX-AP1</shortName>
        <shortName>PAHXAP1</shortName>
    </alternativeName>
</protein>
<sequence length="330" mass="37573">MELLSTPHSIEINNITCDSFRISWAMEDSDLERVTHYFIDLNKKENKNSNKFKHRDVPTKLVAKAVPLPMTVRGHWFLSPRTEYSVAVQTAVKQSDGEYLVSGWSETVEFCTGDYAKEHLAQLQEKAEQIAGRMLRFSVFYRNHHKEYFQHARTHCGNMLQPYLKDNSGSHGSPTSGMLHGVFFSCNTEFNTGQPPQDSPYGRWRFQIPAQRLFNPSTNLYFADFYCMYTAYHYAILVLAPKGSLGDRFCRDRLPLLDIACNKFLTCSVEDGELVFRHAQDLILEIIYTEPVDLSLGTLGEISGHQLMSLSTADAKKDPSCKTCNISVGR</sequence>
<proteinExistence type="evidence at transcript level"/>
<keyword id="KW-0325">Glycoprotein</keyword>
<keyword id="KW-1185">Reference proteome</keyword>
<feature type="chain" id="PRO_0000285813" description="Phytanoyl-CoA hydroxylase-interacting protein">
    <location>
        <begin position="1"/>
        <end position="330"/>
    </location>
</feature>
<feature type="domain" description="Fibronectin type-III" evidence="3">
    <location>
        <begin position="6"/>
        <end position="115"/>
    </location>
</feature>
<feature type="glycosylation site" description="N-linked (GlcNAc...) asparagine" evidence="2">
    <location>
        <position position="14"/>
    </location>
</feature>
<feature type="glycosylation site" description="N-linked (GlcNAc...) asparagine" evidence="2">
    <location>
        <position position="325"/>
    </location>
</feature>
<feature type="sequence conflict" description="In Ref. 1; CAH92440." evidence="4" ref="1">
    <original>P</original>
    <variation>A</variation>
    <location>
        <position position="67"/>
    </location>
</feature>
<organism>
    <name type="scientific">Pongo abelii</name>
    <name type="common">Sumatran orangutan</name>
    <name type="synonym">Pongo pygmaeus abelii</name>
    <dbReference type="NCBI Taxonomy" id="9601"/>
    <lineage>
        <taxon>Eukaryota</taxon>
        <taxon>Metazoa</taxon>
        <taxon>Chordata</taxon>
        <taxon>Craniata</taxon>
        <taxon>Vertebrata</taxon>
        <taxon>Euteleostomi</taxon>
        <taxon>Mammalia</taxon>
        <taxon>Eutheria</taxon>
        <taxon>Euarchontoglires</taxon>
        <taxon>Primates</taxon>
        <taxon>Haplorrhini</taxon>
        <taxon>Catarrhini</taxon>
        <taxon>Hominidae</taxon>
        <taxon>Pongo</taxon>
    </lineage>
</organism>
<gene>
    <name type="primary">PHYHIP</name>
</gene>
<dbReference type="EMBL" id="CR860303">
    <property type="protein sequence ID" value="CAH92440.1"/>
    <property type="molecule type" value="mRNA"/>
</dbReference>
<dbReference type="EMBL" id="CR861260">
    <property type="protein sequence ID" value="CAH93328.1"/>
    <property type="molecule type" value="mRNA"/>
</dbReference>
<dbReference type="RefSeq" id="NP_001126439.1">
    <property type="nucleotide sequence ID" value="NM_001132967.1"/>
</dbReference>
<dbReference type="RefSeq" id="XP_024106368.1">
    <property type="nucleotide sequence ID" value="XM_024250600.3"/>
</dbReference>
<dbReference type="RefSeq" id="XP_054416930.1">
    <property type="nucleotide sequence ID" value="XM_054560955.2"/>
</dbReference>
<dbReference type="RefSeq" id="XP_054416931.1">
    <property type="nucleotide sequence ID" value="XM_054560956.2"/>
</dbReference>
<dbReference type="SMR" id="Q5R4I8"/>
<dbReference type="FunCoup" id="Q5R4I8">
    <property type="interactions" value="386"/>
</dbReference>
<dbReference type="STRING" id="9601.ENSPPYP00000020639"/>
<dbReference type="GlyCosmos" id="Q5R4I8">
    <property type="glycosylation" value="2 sites, No reported glycans"/>
</dbReference>
<dbReference type="Ensembl" id="ENSPPYT00000061616.1">
    <property type="protein sequence ID" value="ENSPPYP00000027116.1"/>
    <property type="gene ID" value="ENSPPYG00000037185.1"/>
</dbReference>
<dbReference type="GeneID" id="100173423"/>
<dbReference type="KEGG" id="pon:100173423"/>
<dbReference type="CTD" id="9796"/>
<dbReference type="eggNOG" id="ENOG502QQIT">
    <property type="taxonomic scope" value="Eukaryota"/>
</dbReference>
<dbReference type="GeneTree" id="ENSGT00390000014563"/>
<dbReference type="InParanoid" id="Q5R4I8"/>
<dbReference type="OMA" id="SPGDHFC"/>
<dbReference type="OrthoDB" id="6101761at2759"/>
<dbReference type="Proteomes" id="UP000001595">
    <property type="component" value="Chromosome 8"/>
</dbReference>
<dbReference type="GO" id="GO:0005737">
    <property type="term" value="C:cytoplasm"/>
    <property type="evidence" value="ECO:0000250"/>
    <property type="project" value="UniProtKB"/>
</dbReference>
<dbReference type="GO" id="GO:1990782">
    <property type="term" value="F:protein tyrosine kinase binding"/>
    <property type="evidence" value="ECO:0007669"/>
    <property type="project" value="Ensembl"/>
</dbReference>
<dbReference type="GO" id="GO:0008104">
    <property type="term" value="P:protein localization"/>
    <property type="evidence" value="ECO:0000250"/>
    <property type="project" value="UniProtKB"/>
</dbReference>
<dbReference type="CDD" id="cd00063">
    <property type="entry name" value="FN3"/>
    <property type="match status" value="1"/>
</dbReference>
<dbReference type="FunFam" id="2.60.40.10:FF:000277">
    <property type="entry name" value="Phytanoyl-CoA hydroxylase-interacting protein-like protein"/>
    <property type="match status" value="1"/>
</dbReference>
<dbReference type="Gene3D" id="2.60.40.10">
    <property type="entry name" value="Immunoglobulins"/>
    <property type="match status" value="1"/>
</dbReference>
<dbReference type="InterPro" id="IPR003961">
    <property type="entry name" value="FN3_dom"/>
</dbReference>
<dbReference type="InterPro" id="IPR036116">
    <property type="entry name" value="FN3_sf"/>
</dbReference>
<dbReference type="InterPro" id="IPR013783">
    <property type="entry name" value="Ig-like_fold"/>
</dbReference>
<dbReference type="InterPro" id="IPR042868">
    <property type="entry name" value="PHYHIP/PHYHIPL"/>
</dbReference>
<dbReference type="InterPro" id="IPR045545">
    <property type="entry name" value="PHYIP/PHIPL_C"/>
</dbReference>
<dbReference type="PANTHER" id="PTHR15698:SF9">
    <property type="entry name" value="PHYTANOYL-COA HYDROXYLASE-INTERACTING PROTEIN"/>
    <property type="match status" value="1"/>
</dbReference>
<dbReference type="PANTHER" id="PTHR15698">
    <property type="entry name" value="PROTEIN CBG15099"/>
    <property type="match status" value="1"/>
</dbReference>
<dbReference type="Pfam" id="PF19281">
    <property type="entry name" value="PHYHIP_C"/>
    <property type="match status" value="1"/>
</dbReference>
<dbReference type="SUPFAM" id="SSF49265">
    <property type="entry name" value="Fibronectin type III"/>
    <property type="match status" value="1"/>
</dbReference>
<dbReference type="PROSITE" id="PS50853">
    <property type="entry name" value="FN3"/>
    <property type="match status" value="1"/>
</dbReference>
<evidence type="ECO:0000250" key="1"/>
<evidence type="ECO:0000255" key="2"/>
<evidence type="ECO:0000255" key="3">
    <source>
        <dbReference type="PROSITE-ProRule" id="PRU00316"/>
    </source>
</evidence>
<evidence type="ECO:0000305" key="4"/>